<name>UDG_RICCN</name>
<accession>Q92GB1</accession>
<protein>
    <recommendedName>
        <fullName>UDP-glucose 6-dehydrogenase</fullName>
        <shortName>UDP-Glc dehydrogenase</shortName>
        <shortName>UDP-GlcDH</shortName>
        <shortName>UDPGDH</shortName>
        <ecNumber>1.1.1.22</ecNumber>
    </recommendedName>
</protein>
<reference key="1">
    <citation type="journal article" date="2001" name="Science">
        <title>Mechanisms of evolution in Rickettsia conorii and R. prowazekii.</title>
        <authorList>
            <person name="Ogata H."/>
            <person name="Audic S."/>
            <person name="Renesto-Audiffren P."/>
            <person name="Fournier P.-E."/>
            <person name="Barbe V."/>
            <person name="Samson D."/>
            <person name="Roux V."/>
            <person name="Cossart P."/>
            <person name="Weissenbach J."/>
            <person name="Claverie J.-M."/>
            <person name="Raoult D."/>
        </authorList>
    </citation>
    <scope>NUCLEOTIDE SEQUENCE [LARGE SCALE GENOMIC DNA]</scope>
    <source>
        <strain>ATCC VR-613 / Malish 7</strain>
    </source>
</reference>
<proteinExistence type="inferred from homology"/>
<keyword id="KW-0520">NAD</keyword>
<keyword id="KW-0560">Oxidoreductase</keyword>
<feature type="chain" id="PRO_0000074051" description="UDP-glucose 6-dehydrogenase">
    <location>
        <begin position="1"/>
        <end position="432"/>
    </location>
</feature>
<feature type="active site" description="Nucleophile" evidence="1">
    <location>
        <position position="258"/>
    </location>
</feature>
<feature type="binding site" evidence="2">
    <location>
        <begin position="2"/>
        <end position="19"/>
    </location>
    <ligand>
        <name>NAD(+)</name>
        <dbReference type="ChEBI" id="CHEBI:57540"/>
    </ligand>
</feature>
<feature type="binding site" evidence="1">
    <location>
        <position position="11"/>
    </location>
    <ligand>
        <name>NAD(+)</name>
        <dbReference type="ChEBI" id="CHEBI:57540"/>
    </ligand>
</feature>
<feature type="binding site" evidence="1">
    <location>
        <position position="30"/>
    </location>
    <ligand>
        <name>NAD(+)</name>
        <dbReference type="ChEBI" id="CHEBI:57540"/>
    </ligand>
</feature>
<feature type="binding site" evidence="1">
    <location>
        <position position="35"/>
    </location>
    <ligand>
        <name>NAD(+)</name>
        <dbReference type="ChEBI" id="CHEBI:57540"/>
    </ligand>
</feature>
<feature type="binding site" evidence="1">
    <location>
        <position position="121"/>
    </location>
    <ligand>
        <name>NAD(+)</name>
        <dbReference type="ChEBI" id="CHEBI:57540"/>
    </ligand>
</feature>
<feature type="binding site" evidence="1">
    <location>
        <begin position="148"/>
        <end position="152"/>
    </location>
    <ligand>
        <name>substrate</name>
    </ligand>
</feature>
<feature type="binding site" evidence="1">
    <location>
        <position position="152"/>
    </location>
    <ligand>
        <name>NAD(+)</name>
        <dbReference type="ChEBI" id="CHEBI:57540"/>
    </ligand>
</feature>
<feature type="binding site" evidence="1">
    <location>
        <position position="202"/>
    </location>
    <ligand>
        <name>substrate</name>
    </ligand>
</feature>
<feature type="binding site" evidence="1">
    <location>
        <position position="206"/>
    </location>
    <ligand>
        <name>substrate</name>
    </ligand>
</feature>
<feature type="binding site" evidence="1">
    <location>
        <begin position="247"/>
        <end position="251"/>
    </location>
    <ligand>
        <name>substrate</name>
    </ligand>
</feature>
<feature type="binding site" evidence="1">
    <location>
        <position position="255"/>
    </location>
    <ligand>
        <name>substrate</name>
    </ligand>
</feature>
<feature type="binding site" evidence="1">
    <location>
        <position position="261"/>
    </location>
    <ligand>
        <name>NAD(+)</name>
        <dbReference type="ChEBI" id="CHEBI:57540"/>
    </ligand>
</feature>
<feature type="binding site" evidence="1">
    <location>
        <position position="319"/>
    </location>
    <ligand>
        <name>substrate</name>
    </ligand>
</feature>
<feature type="binding site" evidence="1">
    <location>
        <position position="326"/>
    </location>
    <ligand>
        <name>NAD(+)</name>
        <dbReference type="ChEBI" id="CHEBI:57540"/>
    </ligand>
</feature>
<organism>
    <name type="scientific">Rickettsia conorii (strain ATCC VR-613 / Malish 7)</name>
    <dbReference type="NCBI Taxonomy" id="272944"/>
    <lineage>
        <taxon>Bacteria</taxon>
        <taxon>Pseudomonadati</taxon>
        <taxon>Pseudomonadota</taxon>
        <taxon>Alphaproteobacteria</taxon>
        <taxon>Rickettsiales</taxon>
        <taxon>Rickettsiaceae</taxon>
        <taxon>Rickettsieae</taxon>
        <taxon>Rickettsia</taxon>
        <taxon>spotted fever group</taxon>
    </lineage>
</organism>
<dbReference type="EC" id="1.1.1.22"/>
<dbReference type="EMBL" id="AE006914">
    <property type="protein sequence ID" value="AAL03750.1"/>
    <property type="molecule type" value="Genomic_DNA"/>
</dbReference>
<dbReference type="PIR" id="D97851">
    <property type="entry name" value="D97851"/>
</dbReference>
<dbReference type="RefSeq" id="WP_010977777.1">
    <property type="nucleotide sequence ID" value="NC_003103.1"/>
</dbReference>
<dbReference type="SMR" id="Q92GB1"/>
<dbReference type="GeneID" id="928375"/>
<dbReference type="KEGG" id="rco:RC1212"/>
<dbReference type="PATRIC" id="fig|272944.4.peg.1389"/>
<dbReference type="HOGENOM" id="CLU_023810_1_2_5"/>
<dbReference type="UniPathway" id="UPA00038">
    <property type="reaction ID" value="UER00491"/>
</dbReference>
<dbReference type="Proteomes" id="UP000000816">
    <property type="component" value="Chromosome"/>
</dbReference>
<dbReference type="GO" id="GO:0051287">
    <property type="term" value="F:NAD binding"/>
    <property type="evidence" value="ECO:0000250"/>
    <property type="project" value="UniProtKB"/>
</dbReference>
<dbReference type="GO" id="GO:0003979">
    <property type="term" value="F:UDP-glucose 6-dehydrogenase activity"/>
    <property type="evidence" value="ECO:0000250"/>
    <property type="project" value="UniProtKB"/>
</dbReference>
<dbReference type="GO" id="GO:0000271">
    <property type="term" value="P:polysaccharide biosynthetic process"/>
    <property type="evidence" value="ECO:0007669"/>
    <property type="project" value="InterPro"/>
</dbReference>
<dbReference type="GO" id="GO:0006065">
    <property type="term" value="P:UDP-glucuronate biosynthetic process"/>
    <property type="evidence" value="ECO:0007669"/>
    <property type="project" value="UniProtKB-UniPathway"/>
</dbReference>
<dbReference type="Gene3D" id="1.20.5.100">
    <property type="entry name" value="Cytochrome c1, transmembrane anchor, C-terminal"/>
    <property type="match status" value="1"/>
</dbReference>
<dbReference type="Gene3D" id="3.40.50.720">
    <property type="entry name" value="NAD(P)-binding Rossmann-like Domain"/>
    <property type="match status" value="2"/>
</dbReference>
<dbReference type="InterPro" id="IPR008927">
    <property type="entry name" value="6-PGluconate_DH-like_C_sf"/>
</dbReference>
<dbReference type="InterPro" id="IPR036291">
    <property type="entry name" value="NAD(P)-bd_dom_sf"/>
</dbReference>
<dbReference type="InterPro" id="IPR017476">
    <property type="entry name" value="UDP-Glc/GDP-Man"/>
</dbReference>
<dbReference type="InterPro" id="IPR014027">
    <property type="entry name" value="UDP-Glc/GDP-Man_DH_C"/>
</dbReference>
<dbReference type="InterPro" id="IPR036220">
    <property type="entry name" value="UDP-Glc/GDP-Man_DH_C_sf"/>
</dbReference>
<dbReference type="InterPro" id="IPR014026">
    <property type="entry name" value="UDP-Glc/GDP-Man_DH_dimer"/>
</dbReference>
<dbReference type="InterPro" id="IPR001732">
    <property type="entry name" value="UDP-Glc/GDP-Man_DH_N"/>
</dbReference>
<dbReference type="InterPro" id="IPR028357">
    <property type="entry name" value="UDPglc_DH_bac"/>
</dbReference>
<dbReference type="NCBIfam" id="TIGR03026">
    <property type="entry name" value="NDP-sugDHase"/>
    <property type="match status" value="1"/>
</dbReference>
<dbReference type="PANTHER" id="PTHR43750">
    <property type="entry name" value="UDP-GLUCOSE 6-DEHYDROGENASE TUAD"/>
    <property type="match status" value="1"/>
</dbReference>
<dbReference type="PANTHER" id="PTHR43750:SF3">
    <property type="entry name" value="UDP-GLUCOSE 6-DEHYDROGENASE TUAD"/>
    <property type="match status" value="1"/>
</dbReference>
<dbReference type="Pfam" id="PF00984">
    <property type="entry name" value="UDPG_MGDP_dh"/>
    <property type="match status" value="1"/>
</dbReference>
<dbReference type="Pfam" id="PF03720">
    <property type="entry name" value="UDPG_MGDP_dh_C"/>
    <property type="match status" value="1"/>
</dbReference>
<dbReference type="Pfam" id="PF03721">
    <property type="entry name" value="UDPG_MGDP_dh_N"/>
    <property type="match status" value="1"/>
</dbReference>
<dbReference type="PIRSF" id="PIRSF500134">
    <property type="entry name" value="UDPglc_DH_bac"/>
    <property type="match status" value="1"/>
</dbReference>
<dbReference type="PIRSF" id="PIRSF000124">
    <property type="entry name" value="UDPglc_GDPman_dh"/>
    <property type="match status" value="1"/>
</dbReference>
<dbReference type="SMART" id="SM00984">
    <property type="entry name" value="UDPG_MGDP_dh_C"/>
    <property type="match status" value="1"/>
</dbReference>
<dbReference type="SUPFAM" id="SSF48179">
    <property type="entry name" value="6-phosphogluconate dehydrogenase C-terminal domain-like"/>
    <property type="match status" value="1"/>
</dbReference>
<dbReference type="SUPFAM" id="SSF51735">
    <property type="entry name" value="NAD(P)-binding Rossmann-fold domains"/>
    <property type="match status" value="1"/>
</dbReference>
<dbReference type="SUPFAM" id="SSF52413">
    <property type="entry name" value="UDP-glucose/GDP-mannose dehydrogenase C-terminal domain"/>
    <property type="match status" value="1"/>
</dbReference>
<gene>
    <name type="primary">udg</name>
    <name type="ordered locus">RC1212</name>
</gene>
<comment type="catalytic activity">
    <reaction>
        <text>UDP-alpha-D-glucose + 2 NAD(+) + H2O = UDP-alpha-D-glucuronate + 2 NADH + 3 H(+)</text>
        <dbReference type="Rhea" id="RHEA:23596"/>
        <dbReference type="ChEBI" id="CHEBI:15377"/>
        <dbReference type="ChEBI" id="CHEBI:15378"/>
        <dbReference type="ChEBI" id="CHEBI:57540"/>
        <dbReference type="ChEBI" id="CHEBI:57945"/>
        <dbReference type="ChEBI" id="CHEBI:58052"/>
        <dbReference type="ChEBI" id="CHEBI:58885"/>
        <dbReference type="EC" id="1.1.1.22"/>
    </reaction>
</comment>
<comment type="pathway">
    <text>Nucleotide-sugar biosynthesis; UDP-alpha-D-glucuronate biosynthesis; UDP-alpha-D-glucuronate from UDP-alpha-D-glucose: step 1/1.</text>
</comment>
<comment type="similarity">
    <text evidence="3">Belongs to the UDP-glucose/GDP-mannose dehydrogenase family.</text>
</comment>
<sequence length="432" mass="47878">MNITFIGSGYVGLVSGIIMGYLGHNVTCLDNDEVKISKLNKQILPIYEAKLDEYLKQALESDRLKFTNIYNNELQNADAIFITVGTPSKGLGEADLKYVYDAIDKVFEHINKDCLIVIKSTVPPGSCSNIIAYLKSRGFSFNVASNPEFLREGSAVEDFLYPDRIVIGVNNKESEAILRKIYAPLQGVKFVVTDLVTSELIKYASNSFLATKIAFINEMADLCEKIGGNIKDLSKGVGLDQRIGQNFLNAGPGFGGSCFPKDILALNNLVENHHIDCRILKAVIKSNKQRPSNMVDKIATLLDGDLKGKNIAILGLTYKAGTDDVRASPAIAIVKILLNKDVYVKAFDPIGLENAKKNLEHKNLLYLDSAVDACKSVDIIVIATEWSEFKELNWQEIYDLVKSPIIIDFRNILDNETMKKIGFRYYAVGSKI</sequence>
<evidence type="ECO:0000250" key="1">
    <source>
        <dbReference type="UniProtKB" id="Q0P8H3"/>
    </source>
</evidence>
<evidence type="ECO:0000255" key="2"/>
<evidence type="ECO:0000305" key="3"/>